<feature type="chain" id="PRO_1000059589" description="Chaperone protein DnaK">
    <location>
        <begin position="1"/>
        <end position="607"/>
    </location>
</feature>
<feature type="region of interest" description="Disordered" evidence="2">
    <location>
        <begin position="578"/>
        <end position="607"/>
    </location>
</feature>
<feature type="modified residue" description="Phosphothreonine; by autocatalysis" evidence="1">
    <location>
        <position position="173"/>
    </location>
</feature>
<keyword id="KW-0067">ATP-binding</keyword>
<keyword id="KW-0143">Chaperone</keyword>
<keyword id="KW-0547">Nucleotide-binding</keyword>
<keyword id="KW-0597">Phosphoprotein</keyword>
<keyword id="KW-0346">Stress response</keyword>
<reference key="1">
    <citation type="journal article" date="2006" name="Proc. Natl. Acad. Sci. U.S.A.">
        <title>Comparative genomics of the lactic acid bacteria.</title>
        <authorList>
            <person name="Makarova K.S."/>
            <person name="Slesarev A."/>
            <person name="Wolf Y.I."/>
            <person name="Sorokin A."/>
            <person name="Mirkin B."/>
            <person name="Koonin E.V."/>
            <person name="Pavlov A."/>
            <person name="Pavlova N."/>
            <person name="Karamychev V."/>
            <person name="Polouchine N."/>
            <person name="Shakhova V."/>
            <person name="Grigoriev I."/>
            <person name="Lou Y."/>
            <person name="Rohksar D."/>
            <person name="Lucas S."/>
            <person name="Huang K."/>
            <person name="Goodstein D.M."/>
            <person name="Hawkins T."/>
            <person name="Plengvidhya V."/>
            <person name="Welker D."/>
            <person name="Hughes J."/>
            <person name="Goh Y."/>
            <person name="Benson A."/>
            <person name="Baldwin K."/>
            <person name="Lee J.-H."/>
            <person name="Diaz-Muniz I."/>
            <person name="Dosti B."/>
            <person name="Smeianov V."/>
            <person name="Wechter W."/>
            <person name="Barabote R."/>
            <person name="Lorca G."/>
            <person name="Altermann E."/>
            <person name="Barrangou R."/>
            <person name="Ganesan B."/>
            <person name="Xie Y."/>
            <person name="Rawsthorne H."/>
            <person name="Tamir D."/>
            <person name="Parker C."/>
            <person name="Breidt F."/>
            <person name="Broadbent J.R."/>
            <person name="Hutkins R."/>
            <person name="O'Sullivan D."/>
            <person name="Steele J."/>
            <person name="Unlu G."/>
            <person name="Saier M.H. Jr."/>
            <person name="Klaenhammer T."/>
            <person name="Richardson P."/>
            <person name="Kozyavkin S."/>
            <person name="Weimer B.C."/>
            <person name="Mills D.A."/>
        </authorList>
    </citation>
    <scope>NUCLEOTIDE SEQUENCE [LARGE SCALE GENOMIC DNA]</scope>
    <source>
        <strain>SK11</strain>
    </source>
</reference>
<comment type="function">
    <text evidence="1">Acts as a chaperone.</text>
</comment>
<comment type="induction">
    <text evidence="1">By stress conditions e.g. heat shock.</text>
</comment>
<comment type="similarity">
    <text evidence="1">Belongs to the heat shock protein 70 family.</text>
</comment>
<accession>Q02ZQ7</accession>
<organism>
    <name type="scientific">Lactococcus lactis subsp. cremoris (strain SK11)</name>
    <dbReference type="NCBI Taxonomy" id="272622"/>
    <lineage>
        <taxon>Bacteria</taxon>
        <taxon>Bacillati</taxon>
        <taxon>Bacillota</taxon>
        <taxon>Bacilli</taxon>
        <taxon>Lactobacillales</taxon>
        <taxon>Streptococcaceae</taxon>
        <taxon>Lactococcus</taxon>
        <taxon>Lactococcus cremoris subsp. cremoris</taxon>
    </lineage>
</organism>
<gene>
    <name evidence="1" type="primary">dnaK</name>
    <name type="ordered locus">LACR_1027</name>
</gene>
<name>DNAK_LACLS</name>
<protein>
    <recommendedName>
        <fullName evidence="1">Chaperone protein DnaK</fullName>
    </recommendedName>
    <alternativeName>
        <fullName evidence="1">HSP70</fullName>
    </alternativeName>
    <alternativeName>
        <fullName evidence="1">Heat shock 70 kDa protein</fullName>
    </alternativeName>
    <alternativeName>
        <fullName evidence="1">Heat shock protein 70</fullName>
    </alternativeName>
</protein>
<evidence type="ECO:0000255" key="1">
    <source>
        <dbReference type="HAMAP-Rule" id="MF_00332"/>
    </source>
</evidence>
<evidence type="ECO:0000256" key="2">
    <source>
        <dbReference type="SAM" id="MobiDB-lite"/>
    </source>
</evidence>
<dbReference type="EMBL" id="CP000425">
    <property type="protein sequence ID" value="ABJ72565.1"/>
    <property type="molecule type" value="Genomic_DNA"/>
</dbReference>
<dbReference type="RefSeq" id="WP_011675956.1">
    <property type="nucleotide sequence ID" value="NC_008527.1"/>
</dbReference>
<dbReference type="SMR" id="Q02ZQ7"/>
<dbReference type="GeneID" id="61109253"/>
<dbReference type="KEGG" id="llc:LACR_1027"/>
<dbReference type="HOGENOM" id="CLU_005965_2_1_9"/>
<dbReference type="Proteomes" id="UP000000240">
    <property type="component" value="Chromosome"/>
</dbReference>
<dbReference type="GO" id="GO:0005524">
    <property type="term" value="F:ATP binding"/>
    <property type="evidence" value="ECO:0007669"/>
    <property type="project" value="UniProtKB-UniRule"/>
</dbReference>
<dbReference type="GO" id="GO:0140662">
    <property type="term" value="F:ATP-dependent protein folding chaperone"/>
    <property type="evidence" value="ECO:0007669"/>
    <property type="project" value="InterPro"/>
</dbReference>
<dbReference type="GO" id="GO:0051082">
    <property type="term" value="F:unfolded protein binding"/>
    <property type="evidence" value="ECO:0007669"/>
    <property type="project" value="InterPro"/>
</dbReference>
<dbReference type="CDD" id="cd10234">
    <property type="entry name" value="ASKHA_NBD_HSP70_DnaK-like"/>
    <property type="match status" value="1"/>
</dbReference>
<dbReference type="FunFam" id="2.60.34.10:FF:000014">
    <property type="entry name" value="Chaperone protein DnaK HSP70"/>
    <property type="match status" value="1"/>
</dbReference>
<dbReference type="FunFam" id="1.20.1270.10:FF:000004">
    <property type="entry name" value="Molecular chaperone DnaK"/>
    <property type="match status" value="1"/>
</dbReference>
<dbReference type="FunFam" id="3.30.420.40:FF:000071">
    <property type="entry name" value="Molecular chaperone DnaK"/>
    <property type="match status" value="1"/>
</dbReference>
<dbReference type="FunFam" id="3.90.640.10:FF:000003">
    <property type="entry name" value="Molecular chaperone DnaK"/>
    <property type="match status" value="1"/>
</dbReference>
<dbReference type="Gene3D" id="1.20.1270.10">
    <property type="match status" value="1"/>
</dbReference>
<dbReference type="Gene3D" id="3.30.420.40">
    <property type="match status" value="2"/>
</dbReference>
<dbReference type="Gene3D" id="3.90.640.10">
    <property type="entry name" value="Actin, Chain A, domain 4"/>
    <property type="match status" value="1"/>
</dbReference>
<dbReference type="Gene3D" id="2.60.34.10">
    <property type="entry name" value="Substrate Binding Domain Of DNAk, Chain A, domain 1"/>
    <property type="match status" value="1"/>
</dbReference>
<dbReference type="HAMAP" id="MF_00332">
    <property type="entry name" value="DnaK"/>
    <property type="match status" value="1"/>
</dbReference>
<dbReference type="InterPro" id="IPR043129">
    <property type="entry name" value="ATPase_NBD"/>
</dbReference>
<dbReference type="InterPro" id="IPR012725">
    <property type="entry name" value="Chaperone_DnaK"/>
</dbReference>
<dbReference type="InterPro" id="IPR018181">
    <property type="entry name" value="Heat_shock_70_CS"/>
</dbReference>
<dbReference type="InterPro" id="IPR029048">
    <property type="entry name" value="HSP70_C_sf"/>
</dbReference>
<dbReference type="InterPro" id="IPR029047">
    <property type="entry name" value="HSP70_peptide-bd_sf"/>
</dbReference>
<dbReference type="InterPro" id="IPR013126">
    <property type="entry name" value="Hsp_70_fam"/>
</dbReference>
<dbReference type="NCBIfam" id="NF001413">
    <property type="entry name" value="PRK00290.1"/>
    <property type="match status" value="1"/>
</dbReference>
<dbReference type="NCBIfam" id="TIGR02350">
    <property type="entry name" value="prok_dnaK"/>
    <property type="match status" value="1"/>
</dbReference>
<dbReference type="PANTHER" id="PTHR19375">
    <property type="entry name" value="HEAT SHOCK PROTEIN 70KDA"/>
    <property type="match status" value="1"/>
</dbReference>
<dbReference type="Pfam" id="PF00012">
    <property type="entry name" value="HSP70"/>
    <property type="match status" value="1"/>
</dbReference>
<dbReference type="PRINTS" id="PR00301">
    <property type="entry name" value="HEATSHOCK70"/>
</dbReference>
<dbReference type="SUPFAM" id="SSF53067">
    <property type="entry name" value="Actin-like ATPase domain"/>
    <property type="match status" value="2"/>
</dbReference>
<dbReference type="SUPFAM" id="SSF100934">
    <property type="entry name" value="Heat shock protein 70kD (HSP70), C-terminal subdomain"/>
    <property type="match status" value="1"/>
</dbReference>
<dbReference type="SUPFAM" id="SSF100920">
    <property type="entry name" value="Heat shock protein 70kD (HSP70), peptide-binding domain"/>
    <property type="match status" value="1"/>
</dbReference>
<dbReference type="PROSITE" id="PS00297">
    <property type="entry name" value="HSP70_1"/>
    <property type="match status" value="1"/>
</dbReference>
<dbReference type="PROSITE" id="PS00329">
    <property type="entry name" value="HSP70_2"/>
    <property type="match status" value="1"/>
</dbReference>
<dbReference type="PROSITE" id="PS01036">
    <property type="entry name" value="HSP70_3"/>
    <property type="match status" value="1"/>
</dbReference>
<proteinExistence type="inferred from homology"/>
<sequence>MSKIIGIDLGTTNSAVAVLEGTESKIIPNPEGNRTTPSVVAFKNGEIIVGDAAKRQAVTNPETIISIKSKMGTSEKVSANGKEYTPQEISAMILQNLKATAESYLGEKVEKAVITVPAYFNDAQRQATKDAGKIAGLEVERIVNEPTAAALAYGLDKTDKDEKILVFDLGGGTFDVSILELGDGVFDVLATAGNNKLGGDDFDQKIIDWMVAEFKKENGIDLGQDKMALQRLKDAAEKAKKDLSGVTTTQISLPFITAGAAGPLHLEMALTRAKFDELTHDLVEATRQPVRQALSDAGLSTSDIDEVLLVGGSTRIPAVVELVRHETNKEPNKSVNPDEVVAMGAAIQGGVITGDVKDVVLLDVTPLSLGIETMGGVFTKLIDRNTTIPTSKSQVFSTAADNQPAVDIHVLQGERPMAADNKTLGRFQLTDIPAAPRGIPQIEVTFDIDKNGIVSVKAKDLGTQKEQTIVIKSNSGLSDEEIDKMMKDAEANADADAKRKEEVDTRNEADALVFQTEKTLKDLEGKVEEAEVKKAEDAKEELKKALEGEDIDDIKAKSEALSEIAQNLAVKLYEQANAAQGEAGEATDAQEGPKDANTFDGDFEESK</sequence>